<accession>Q0SPQ4</accession>
<dbReference type="EMBL" id="CP000312">
    <property type="protein sequence ID" value="ABG86784.1"/>
    <property type="molecule type" value="Genomic_DNA"/>
</dbReference>
<dbReference type="RefSeq" id="WP_011593312.1">
    <property type="nucleotide sequence ID" value="NC_008262.1"/>
</dbReference>
<dbReference type="SMR" id="Q0SPQ4"/>
<dbReference type="KEGG" id="cpr:CPR_2668"/>
<dbReference type="Proteomes" id="UP000001824">
    <property type="component" value="Chromosome"/>
</dbReference>
<dbReference type="GO" id="GO:0005829">
    <property type="term" value="C:cytosol"/>
    <property type="evidence" value="ECO:0007669"/>
    <property type="project" value="TreeGrafter"/>
</dbReference>
<dbReference type="GO" id="GO:0050660">
    <property type="term" value="F:flavin adenine dinucleotide binding"/>
    <property type="evidence" value="ECO:0007669"/>
    <property type="project" value="UniProtKB-UniRule"/>
</dbReference>
<dbReference type="GO" id="GO:0030488">
    <property type="term" value="P:tRNA methylation"/>
    <property type="evidence" value="ECO:0007669"/>
    <property type="project" value="TreeGrafter"/>
</dbReference>
<dbReference type="GO" id="GO:0002098">
    <property type="term" value="P:tRNA wobble uridine modification"/>
    <property type="evidence" value="ECO:0007669"/>
    <property type="project" value="InterPro"/>
</dbReference>
<dbReference type="FunFam" id="1.10.10.1800:FF:000001">
    <property type="entry name" value="tRNA uridine 5-carboxymethylaminomethyl modification enzyme MnmG"/>
    <property type="match status" value="1"/>
</dbReference>
<dbReference type="FunFam" id="1.10.150.570:FF:000001">
    <property type="entry name" value="tRNA uridine 5-carboxymethylaminomethyl modification enzyme MnmG"/>
    <property type="match status" value="1"/>
</dbReference>
<dbReference type="FunFam" id="3.50.50.60:FF:000002">
    <property type="entry name" value="tRNA uridine 5-carboxymethylaminomethyl modification enzyme MnmG"/>
    <property type="match status" value="1"/>
</dbReference>
<dbReference type="FunFam" id="3.50.50.60:FF:000063">
    <property type="entry name" value="tRNA uridine 5-carboxymethylaminomethyl modification enzyme MnmG"/>
    <property type="match status" value="1"/>
</dbReference>
<dbReference type="Gene3D" id="3.50.50.60">
    <property type="entry name" value="FAD/NAD(P)-binding domain"/>
    <property type="match status" value="2"/>
</dbReference>
<dbReference type="Gene3D" id="1.10.150.570">
    <property type="entry name" value="GidA associated domain, C-terminal subdomain"/>
    <property type="match status" value="1"/>
</dbReference>
<dbReference type="Gene3D" id="1.10.10.1800">
    <property type="entry name" value="tRNA uridine 5-carboxymethylaminomethyl modification enzyme MnmG/GidA"/>
    <property type="match status" value="1"/>
</dbReference>
<dbReference type="HAMAP" id="MF_00129">
    <property type="entry name" value="MnmG_GidA"/>
    <property type="match status" value="1"/>
</dbReference>
<dbReference type="InterPro" id="IPR036188">
    <property type="entry name" value="FAD/NAD-bd_sf"/>
</dbReference>
<dbReference type="InterPro" id="IPR049312">
    <property type="entry name" value="GIDA_C_N"/>
</dbReference>
<dbReference type="InterPro" id="IPR004416">
    <property type="entry name" value="MnmG"/>
</dbReference>
<dbReference type="InterPro" id="IPR002218">
    <property type="entry name" value="MnmG-rel"/>
</dbReference>
<dbReference type="InterPro" id="IPR020595">
    <property type="entry name" value="MnmG-rel_CS"/>
</dbReference>
<dbReference type="InterPro" id="IPR026904">
    <property type="entry name" value="MnmG_C"/>
</dbReference>
<dbReference type="InterPro" id="IPR047001">
    <property type="entry name" value="MnmG_C_subdom"/>
</dbReference>
<dbReference type="InterPro" id="IPR044920">
    <property type="entry name" value="MnmG_C_subdom_sf"/>
</dbReference>
<dbReference type="InterPro" id="IPR040131">
    <property type="entry name" value="MnmG_N"/>
</dbReference>
<dbReference type="NCBIfam" id="TIGR00136">
    <property type="entry name" value="mnmG_gidA"/>
    <property type="match status" value="1"/>
</dbReference>
<dbReference type="PANTHER" id="PTHR11806">
    <property type="entry name" value="GLUCOSE INHIBITED DIVISION PROTEIN A"/>
    <property type="match status" value="1"/>
</dbReference>
<dbReference type="PANTHER" id="PTHR11806:SF0">
    <property type="entry name" value="PROTEIN MTO1 HOMOLOG, MITOCHONDRIAL"/>
    <property type="match status" value="1"/>
</dbReference>
<dbReference type="Pfam" id="PF01134">
    <property type="entry name" value="GIDA"/>
    <property type="match status" value="1"/>
</dbReference>
<dbReference type="Pfam" id="PF21680">
    <property type="entry name" value="GIDA_C_1st"/>
    <property type="match status" value="1"/>
</dbReference>
<dbReference type="Pfam" id="PF13932">
    <property type="entry name" value="SAM_GIDA_C"/>
    <property type="match status" value="1"/>
</dbReference>
<dbReference type="SMART" id="SM01228">
    <property type="entry name" value="GIDA_assoc_3"/>
    <property type="match status" value="1"/>
</dbReference>
<dbReference type="SUPFAM" id="SSF51905">
    <property type="entry name" value="FAD/NAD(P)-binding domain"/>
    <property type="match status" value="1"/>
</dbReference>
<dbReference type="PROSITE" id="PS01280">
    <property type="entry name" value="GIDA_1"/>
    <property type="match status" value="1"/>
</dbReference>
<dbReference type="PROSITE" id="PS01281">
    <property type="entry name" value="GIDA_2"/>
    <property type="match status" value="1"/>
</dbReference>
<comment type="function">
    <text evidence="1">NAD-binding protein involved in the addition of a carboxymethylaminomethyl (cmnm) group at the wobble position (U34) of certain tRNAs, forming tRNA-cmnm(5)s(2)U34.</text>
</comment>
<comment type="cofactor">
    <cofactor evidence="1">
        <name>FAD</name>
        <dbReference type="ChEBI" id="CHEBI:57692"/>
    </cofactor>
</comment>
<comment type="subunit">
    <text evidence="1">Homodimer. Heterotetramer of two MnmE and two MnmG subunits.</text>
</comment>
<comment type="subcellular location">
    <subcellularLocation>
        <location evidence="1">Cytoplasm</location>
    </subcellularLocation>
</comment>
<comment type="similarity">
    <text evidence="1">Belongs to the MnmG family.</text>
</comment>
<protein>
    <recommendedName>
        <fullName evidence="1">tRNA uridine 5-carboxymethylaminomethyl modification enzyme MnmG</fullName>
    </recommendedName>
    <alternativeName>
        <fullName evidence="1">Glucose-inhibited division protein A</fullName>
    </alternativeName>
</protein>
<name>MNMG_CLOPS</name>
<proteinExistence type="inferred from homology"/>
<keyword id="KW-0963">Cytoplasm</keyword>
<keyword id="KW-0274">FAD</keyword>
<keyword id="KW-0285">Flavoprotein</keyword>
<keyword id="KW-0520">NAD</keyword>
<keyword id="KW-0819">tRNA processing</keyword>
<sequence>MRYNAGSYDIVVIGAGHAGCEAGLAAARMGCKTLVCTLTLDSVAMMPCNPNIGGTAKGHLVREIDALGGEMGVNIDHTFIQSKMLNTSKGPAVHSLRAQADKKKYQERMKKVLETQENLHLRQLEVVSVEVEDGKVKGVLTKNGAFFECKAVIMTSGTYLQSRIIIGDVSYSQGPNGLSNANELSKSLIDLGIDLRRFKTGTPARVNKRSVDFSKMIEQPGDEEIIPFSFISGNIDRDQVSCWLTYTNEETHKVIQENIHRSPMYNGSIKGVGPRYCPSIEDKVMRFQDKDRHQIFIEPEGDDTEEMYVGGMSSSLPEDVQVQMIKTVPGLENAEIMRTAYAIEYDCIDPTQLKASLEFKNIDGFFSAGQINGSSGYEEAGAQGIVAGINAALKVQGKDPMILTRSDGYVGVLIDDLITKGTNEPYRMMTSRAEYRLLLRQDNADFRLTEIGHNVGLVTEERWNKFQERKQNLERELERLKELQITNKTENNEKIVELGSTELKKPIRMYELIKRPELDYFSLACLDPERPDLPKDIGDQINIIARYEGYIQTQLEQVAQFKKFEKKVLPEDLDYNDVNSLRIEAIQKLNKIRPLNIGQASRISGVSPADISVLLIFLEHYRKTGKNTDN</sequence>
<organism>
    <name type="scientific">Clostridium perfringens (strain SM101 / Type A)</name>
    <dbReference type="NCBI Taxonomy" id="289380"/>
    <lineage>
        <taxon>Bacteria</taxon>
        <taxon>Bacillati</taxon>
        <taxon>Bacillota</taxon>
        <taxon>Clostridia</taxon>
        <taxon>Eubacteriales</taxon>
        <taxon>Clostridiaceae</taxon>
        <taxon>Clostridium</taxon>
    </lineage>
</organism>
<evidence type="ECO:0000255" key="1">
    <source>
        <dbReference type="HAMAP-Rule" id="MF_00129"/>
    </source>
</evidence>
<feature type="chain" id="PRO_1000016586" description="tRNA uridine 5-carboxymethylaminomethyl modification enzyme MnmG">
    <location>
        <begin position="1"/>
        <end position="630"/>
    </location>
</feature>
<feature type="binding site" evidence="1">
    <location>
        <begin position="14"/>
        <end position="19"/>
    </location>
    <ligand>
        <name>FAD</name>
        <dbReference type="ChEBI" id="CHEBI:57692"/>
    </ligand>
</feature>
<feature type="binding site" evidence="1">
    <location>
        <begin position="273"/>
        <end position="287"/>
    </location>
    <ligand>
        <name>NAD(+)</name>
        <dbReference type="ChEBI" id="CHEBI:57540"/>
    </ligand>
</feature>
<gene>
    <name evidence="1" type="primary">mnmG</name>
    <name evidence="1" type="synonym">gidA</name>
    <name type="ordered locus">CPR_2668</name>
</gene>
<reference key="1">
    <citation type="journal article" date="2006" name="Genome Res.">
        <title>Skewed genomic variability in strains of the toxigenic bacterial pathogen, Clostridium perfringens.</title>
        <authorList>
            <person name="Myers G.S.A."/>
            <person name="Rasko D.A."/>
            <person name="Cheung J.K."/>
            <person name="Ravel J."/>
            <person name="Seshadri R."/>
            <person name="DeBoy R.T."/>
            <person name="Ren Q."/>
            <person name="Varga J."/>
            <person name="Awad M.M."/>
            <person name="Brinkac L.M."/>
            <person name="Daugherty S.C."/>
            <person name="Haft D.H."/>
            <person name="Dodson R.J."/>
            <person name="Madupu R."/>
            <person name="Nelson W.C."/>
            <person name="Rosovitz M.J."/>
            <person name="Sullivan S.A."/>
            <person name="Khouri H."/>
            <person name="Dimitrov G.I."/>
            <person name="Watkins K.L."/>
            <person name="Mulligan S."/>
            <person name="Benton J."/>
            <person name="Radune D."/>
            <person name="Fisher D.J."/>
            <person name="Atkins H.S."/>
            <person name="Hiscox T."/>
            <person name="Jost B.H."/>
            <person name="Billington S.J."/>
            <person name="Songer J.G."/>
            <person name="McClane B.A."/>
            <person name="Titball R.W."/>
            <person name="Rood J.I."/>
            <person name="Melville S.B."/>
            <person name="Paulsen I.T."/>
        </authorList>
    </citation>
    <scope>NUCLEOTIDE SEQUENCE [LARGE SCALE GENOMIC DNA]</scope>
    <source>
        <strain>SM101 / Type A</strain>
    </source>
</reference>